<sequence length="295" mass="33838">MTKQIQKTVSVCIIGRPNSGKSTLLNRIIGEKLSIVTPKVQTTRSIITGIITLKDTQVILYDTPGIFEPKGTLEKAMVRCAWSSLHSADLVMLIIDSLKPFDDVTHNILDKLCSLNIVPVFLLNKIEIESKYLNNLKAFLTENHPDSLLFPISALSGKNIDRLLEYITSKAKIAPWLYAEDDITDLPMRFIAAEITREQLFLNLQQELPYKLTVQTEKWEELKDKSVKINQVIVVARESYKTIILGKNGSKIKEIGAKSRMQMEQFFSCPIHLFLFVKVRELWENNQEFYQYMKI</sequence>
<reference key="1">
    <citation type="submission" date="2007-09" db="EMBL/GenBank/DDBJ databases">
        <title>Complete genome sequence of Rickettsia canadensis.</title>
        <authorList>
            <person name="Madan A."/>
            <person name="Fahey J."/>
            <person name="Helton E."/>
            <person name="Ketteman M."/>
            <person name="Madan A."/>
            <person name="Rodrigues S."/>
            <person name="Sanchez A."/>
            <person name="Whiting M."/>
            <person name="Dasch G."/>
            <person name="Eremeeva M."/>
        </authorList>
    </citation>
    <scope>NUCLEOTIDE SEQUENCE [LARGE SCALE GENOMIC DNA]</scope>
    <source>
        <strain>McKiel</strain>
    </source>
</reference>
<name>ERA_RICCK</name>
<evidence type="ECO:0000255" key="1">
    <source>
        <dbReference type="HAMAP-Rule" id="MF_00367"/>
    </source>
</evidence>
<evidence type="ECO:0000255" key="2">
    <source>
        <dbReference type="PROSITE-ProRule" id="PRU01050"/>
    </source>
</evidence>
<dbReference type="EMBL" id="CP000409">
    <property type="protein sequence ID" value="ABV73067.1"/>
    <property type="molecule type" value="Genomic_DNA"/>
</dbReference>
<dbReference type="RefSeq" id="WP_012148268.1">
    <property type="nucleotide sequence ID" value="NC_009879.1"/>
</dbReference>
<dbReference type="SMR" id="A8EXI4"/>
<dbReference type="STRING" id="293613.A1E_00595"/>
<dbReference type="KEGG" id="rcm:A1E_00595"/>
<dbReference type="eggNOG" id="COG1159">
    <property type="taxonomic scope" value="Bacteria"/>
</dbReference>
<dbReference type="HOGENOM" id="CLU_038009_1_1_5"/>
<dbReference type="Proteomes" id="UP000007056">
    <property type="component" value="Chromosome"/>
</dbReference>
<dbReference type="GO" id="GO:0005829">
    <property type="term" value="C:cytosol"/>
    <property type="evidence" value="ECO:0007669"/>
    <property type="project" value="TreeGrafter"/>
</dbReference>
<dbReference type="GO" id="GO:0005886">
    <property type="term" value="C:plasma membrane"/>
    <property type="evidence" value="ECO:0007669"/>
    <property type="project" value="UniProtKB-SubCell"/>
</dbReference>
<dbReference type="GO" id="GO:0005525">
    <property type="term" value="F:GTP binding"/>
    <property type="evidence" value="ECO:0007669"/>
    <property type="project" value="UniProtKB-UniRule"/>
</dbReference>
<dbReference type="GO" id="GO:0003924">
    <property type="term" value="F:GTPase activity"/>
    <property type="evidence" value="ECO:0007669"/>
    <property type="project" value="UniProtKB-UniRule"/>
</dbReference>
<dbReference type="GO" id="GO:0043024">
    <property type="term" value="F:ribosomal small subunit binding"/>
    <property type="evidence" value="ECO:0007669"/>
    <property type="project" value="TreeGrafter"/>
</dbReference>
<dbReference type="GO" id="GO:0070181">
    <property type="term" value="F:small ribosomal subunit rRNA binding"/>
    <property type="evidence" value="ECO:0007669"/>
    <property type="project" value="UniProtKB-UniRule"/>
</dbReference>
<dbReference type="GO" id="GO:0000028">
    <property type="term" value="P:ribosomal small subunit assembly"/>
    <property type="evidence" value="ECO:0007669"/>
    <property type="project" value="TreeGrafter"/>
</dbReference>
<dbReference type="CDD" id="cd04163">
    <property type="entry name" value="Era"/>
    <property type="match status" value="1"/>
</dbReference>
<dbReference type="CDD" id="cd22534">
    <property type="entry name" value="KH-II_Era"/>
    <property type="match status" value="1"/>
</dbReference>
<dbReference type="Gene3D" id="3.30.300.20">
    <property type="match status" value="1"/>
</dbReference>
<dbReference type="Gene3D" id="3.40.50.300">
    <property type="entry name" value="P-loop containing nucleotide triphosphate hydrolases"/>
    <property type="match status" value="1"/>
</dbReference>
<dbReference type="HAMAP" id="MF_00367">
    <property type="entry name" value="GTPase_Era"/>
    <property type="match status" value="1"/>
</dbReference>
<dbReference type="InterPro" id="IPR030388">
    <property type="entry name" value="G_ERA_dom"/>
</dbReference>
<dbReference type="InterPro" id="IPR006073">
    <property type="entry name" value="GTP-bd"/>
</dbReference>
<dbReference type="InterPro" id="IPR005662">
    <property type="entry name" value="GTPase_Era-like"/>
</dbReference>
<dbReference type="InterPro" id="IPR015946">
    <property type="entry name" value="KH_dom-like_a/b"/>
</dbReference>
<dbReference type="InterPro" id="IPR004044">
    <property type="entry name" value="KH_dom_type_2"/>
</dbReference>
<dbReference type="InterPro" id="IPR009019">
    <property type="entry name" value="KH_sf_prok-type"/>
</dbReference>
<dbReference type="InterPro" id="IPR027417">
    <property type="entry name" value="P-loop_NTPase"/>
</dbReference>
<dbReference type="InterPro" id="IPR005225">
    <property type="entry name" value="Small_GTP-bd"/>
</dbReference>
<dbReference type="NCBIfam" id="TIGR00436">
    <property type="entry name" value="era"/>
    <property type="match status" value="1"/>
</dbReference>
<dbReference type="NCBIfam" id="NF000908">
    <property type="entry name" value="PRK00089.1"/>
    <property type="match status" value="1"/>
</dbReference>
<dbReference type="NCBIfam" id="TIGR00231">
    <property type="entry name" value="small_GTP"/>
    <property type="match status" value="1"/>
</dbReference>
<dbReference type="PANTHER" id="PTHR42698">
    <property type="entry name" value="GTPASE ERA"/>
    <property type="match status" value="1"/>
</dbReference>
<dbReference type="PANTHER" id="PTHR42698:SF1">
    <property type="entry name" value="GTPASE ERA, MITOCHONDRIAL"/>
    <property type="match status" value="1"/>
</dbReference>
<dbReference type="Pfam" id="PF07650">
    <property type="entry name" value="KH_2"/>
    <property type="match status" value="1"/>
</dbReference>
<dbReference type="Pfam" id="PF01926">
    <property type="entry name" value="MMR_HSR1"/>
    <property type="match status" value="1"/>
</dbReference>
<dbReference type="SUPFAM" id="SSF52540">
    <property type="entry name" value="P-loop containing nucleoside triphosphate hydrolases"/>
    <property type="match status" value="1"/>
</dbReference>
<dbReference type="SUPFAM" id="SSF54814">
    <property type="entry name" value="Prokaryotic type KH domain (KH-domain type II)"/>
    <property type="match status" value="1"/>
</dbReference>
<dbReference type="PROSITE" id="PS51713">
    <property type="entry name" value="G_ERA"/>
    <property type="match status" value="1"/>
</dbReference>
<dbReference type="PROSITE" id="PS50823">
    <property type="entry name" value="KH_TYPE_2"/>
    <property type="match status" value="1"/>
</dbReference>
<protein>
    <recommendedName>
        <fullName evidence="1">GTPase Era</fullName>
    </recommendedName>
</protein>
<feature type="chain" id="PRO_1000079729" description="GTPase Era">
    <location>
        <begin position="1"/>
        <end position="295"/>
    </location>
</feature>
<feature type="domain" description="Era-type G" evidence="2">
    <location>
        <begin position="7"/>
        <end position="176"/>
    </location>
</feature>
<feature type="domain" description="KH type-2" evidence="1">
    <location>
        <begin position="204"/>
        <end position="281"/>
    </location>
</feature>
<feature type="region of interest" description="G1" evidence="2">
    <location>
        <begin position="15"/>
        <end position="22"/>
    </location>
</feature>
<feature type="region of interest" description="G2" evidence="2">
    <location>
        <begin position="41"/>
        <end position="45"/>
    </location>
</feature>
<feature type="region of interest" description="G3" evidence="2">
    <location>
        <begin position="62"/>
        <end position="65"/>
    </location>
</feature>
<feature type="region of interest" description="G4" evidence="2">
    <location>
        <begin position="124"/>
        <end position="127"/>
    </location>
</feature>
<feature type="region of interest" description="G5" evidence="2">
    <location>
        <begin position="152"/>
        <end position="154"/>
    </location>
</feature>
<feature type="binding site" evidence="1">
    <location>
        <begin position="15"/>
        <end position="22"/>
    </location>
    <ligand>
        <name>GTP</name>
        <dbReference type="ChEBI" id="CHEBI:37565"/>
    </ligand>
</feature>
<feature type="binding site" evidence="1">
    <location>
        <begin position="62"/>
        <end position="66"/>
    </location>
    <ligand>
        <name>GTP</name>
        <dbReference type="ChEBI" id="CHEBI:37565"/>
    </ligand>
</feature>
<feature type="binding site" evidence="1">
    <location>
        <begin position="124"/>
        <end position="127"/>
    </location>
    <ligand>
        <name>GTP</name>
        <dbReference type="ChEBI" id="CHEBI:37565"/>
    </ligand>
</feature>
<accession>A8EXI4</accession>
<organism>
    <name type="scientific">Rickettsia canadensis (strain McKiel)</name>
    <dbReference type="NCBI Taxonomy" id="293613"/>
    <lineage>
        <taxon>Bacteria</taxon>
        <taxon>Pseudomonadati</taxon>
        <taxon>Pseudomonadota</taxon>
        <taxon>Alphaproteobacteria</taxon>
        <taxon>Rickettsiales</taxon>
        <taxon>Rickettsiaceae</taxon>
        <taxon>Rickettsieae</taxon>
        <taxon>Rickettsia</taxon>
        <taxon>belli group</taxon>
    </lineage>
</organism>
<gene>
    <name evidence="1" type="primary">era</name>
    <name type="ordered locus">A1E_00595</name>
</gene>
<proteinExistence type="inferred from homology"/>
<comment type="function">
    <text evidence="1">An essential GTPase that binds both GDP and GTP, with rapid nucleotide exchange. Plays a role in 16S rRNA processing and 30S ribosomal subunit biogenesis and possibly also in cell cycle regulation and energy metabolism.</text>
</comment>
<comment type="subunit">
    <text evidence="1">Monomer.</text>
</comment>
<comment type="subcellular location">
    <subcellularLocation>
        <location>Cytoplasm</location>
    </subcellularLocation>
    <subcellularLocation>
        <location evidence="1">Cell inner membrane</location>
        <topology evidence="1">Peripheral membrane protein</topology>
    </subcellularLocation>
</comment>
<comment type="similarity">
    <text evidence="1 2">Belongs to the TRAFAC class TrmE-Era-EngA-EngB-Septin-like GTPase superfamily. Era GTPase family.</text>
</comment>
<keyword id="KW-0997">Cell inner membrane</keyword>
<keyword id="KW-1003">Cell membrane</keyword>
<keyword id="KW-0963">Cytoplasm</keyword>
<keyword id="KW-0342">GTP-binding</keyword>
<keyword id="KW-0472">Membrane</keyword>
<keyword id="KW-0547">Nucleotide-binding</keyword>
<keyword id="KW-0690">Ribosome biogenesis</keyword>
<keyword id="KW-0694">RNA-binding</keyword>
<keyword id="KW-0699">rRNA-binding</keyword>